<protein>
    <recommendedName>
        <fullName evidence="1">Small ribosomal subunit protein bS21</fullName>
    </recommendedName>
    <alternativeName>
        <fullName evidence="3">30S ribosomal protein S21</fullName>
    </alternativeName>
</protein>
<keyword id="KW-1185">Reference proteome</keyword>
<keyword id="KW-0687">Ribonucleoprotein</keyword>
<keyword id="KW-0689">Ribosomal protein</keyword>
<name>RS21_NITHX</name>
<comment type="similarity">
    <text evidence="1">Belongs to the bacterial ribosomal protein bS21 family.</text>
</comment>
<reference key="1">
    <citation type="submission" date="2006-03" db="EMBL/GenBank/DDBJ databases">
        <title>Complete sequence of chromosome of Nitrobacter hamburgensis X14.</title>
        <authorList>
            <consortium name="US DOE Joint Genome Institute"/>
            <person name="Copeland A."/>
            <person name="Lucas S."/>
            <person name="Lapidus A."/>
            <person name="Barry K."/>
            <person name="Detter J.C."/>
            <person name="Glavina del Rio T."/>
            <person name="Hammon N."/>
            <person name="Israni S."/>
            <person name="Dalin E."/>
            <person name="Tice H."/>
            <person name="Pitluck S."/>
            <person name="Chain P."/>
            <person name="Malfatti S."/>
            <person name="Shin M."/>
            <person name="Vergez L."/>
            <person name="Schmutz J."/>
            <person name="Larimer F."/>
            <person name="Land M."/>
            <person name="Hauser L."/>
            <person name="Kyrpides N."/>
            <person name="Ivanova N."/>
            <person name="Ward B."/>
            <person name="Arp D."/>
            <person name="Klotz M."/>
            <person name="Stein L."/>
            <person name="O'Mullan G."/>
            <person name="Starkenburg S."/>
            <person name="Sayavedra L."/>
            <person name="Poret-Peterson A.T."/>
            <person name="Gentry M.E."/>
            <person name="Bruce D."/>
            <person name="Richardson P."/>
        </authorList>
    </citation>
    <scope>NUCLEOTIDE SEQUENCE [LARGE SCALE GENOMIC DNA]</scope>
    <source>
        <strain>DSM 10229 / NCIMB 13809 / X14</strain>
    </source>
</reference>
<accession>Q1QNY6</accession>
<feature type="chain" id="PRO_0000266713" description="Small ribosomal subunit protein bS21">
    <location>
        <begin position="1"/>
        <end position="95"/>
    </location>
</feature>
<feature type="region of interest" description="Disordered" evidence="2">
    <location>
        <begin position="55"/>
        <end position="95"/>
    </location>
</feature>
<feature type="compositionally biased region" description="Gly residues" evidence="2">
    <location>
        <begin position="78"/>
        <end position="89"/>
    </location>
</feature>
<proteinExistence type="inferred from homology"/>
<gene>
    <name evidence="1" type="primary">rpsU</name>
    <name type="ordered locus">Nham_1233</name>
</gene>
<evidence type="ECO:0000255" key="1">
    <source>
        <dbReference type="HAMAP-Rule" id="MF_00358"/>
    </source>
</evidence>
<evidence type="ECO:0000256" key="2">
    <source>
        <dbReference type="SAM" id="MobiDB-lite"/>
    </source>
</evidence>
<evidence type="ECO:0000305" key="3"/>
<sequence length="95" mass="10643">MQVLVRDNNVDQALKALKKKMQREGIFREMKLRGHYEKPSEKKAREKAEAVRRARKLARKKMQREGLLPMKPKPVFGAGPGAGRGGPGAGARPPR</sequence>
<dbReference type="EMBL" id="CP000319">
    <property type="protein sequence ID" value="ABE62061.1"/>
    <property type="molecule type" value="Genomic_DNA"/>
</dbReference>
<dbReference type="RefSeq" id="WP_011509754.1">
    <property type="nucleotide sequence ID" value="NC_007964.1"/>
</dbReference>
<dbReference type="SMR" id="Q1QNY6"/>
<dbReference type="STRING" id="323097.Nham_1233"/>
<dbReference type="KEGG" id="nha:Nham_1233"/>
<dbReference type="eggNOG" id="COG0828">
    <property type="taxonomic scope" value="Bacteria"/>
</dbReference>
<dbReference type="HOGENOM" id="CLU_159258_0_1_5"/>
<dbReference type="OrthoDB" id="9811907at2"/>
<dbReference type="Proteomes" id="UP000001953">
    <property type="component" value="Chromosome"/>
</dbReference>
<dbReference type="GO" id="GO:1990904">
    <property type="term" value="C:ribonucleoprotein complex"/>
    <property type="evidence" value="ECO:0007669"/>
    <property type="project" value="UniProtKB-KW"/>
</dbReference>
<dbReference type="GO" id="GO:0005840">
    <property type="term" value="C:ribosome"/>
    <property type="evidence" value="ECO:0007669"/>
    <property type="project" value="UniProtKB-KW"/>
</dbReference>
<dbReference type="GO" id="GO:0003735">
    <property type="term" value="F:structural constituent of ribosome"/>
    <property type="evidence" value="ECO:0007669"/>
    <property type="project" value="InterPro"/>
</dbReference>
<dbReference type="GO" id="GO:0006412">
    <property type="term" value="P:translation"/>
    <property type="evidence" value="ECO:0007669"/>
    <property type="project" value="UniProtKB-UniRule"/>
</dbReference>
<dbReference type="Gene3D" id="1.20.5.1150">
    <property type="entry name" value="Ribosomal protein S8"/>
    <property type="match status" value="1"/>
</dbReference>
<dbReference type="HAMAP" id="MF_00358">
    <property type="entry name" value="Ribosomal_bS21"/>
    <property type="match status" value="1"/>
</dbReference>
<dbReference type="InterPro" id="IPR001911">
    <property type="entry name" value="Ribosomal_bS21"/>
</dbReference>
<dbReference type="InterPro" id="IPR018278">
    <property type="entry name" value="Ribosomal_bS21_CS"/>
</dbReference>
<dbReference type="InterPro" id="IPR038380">
    <property type="entry name" value="Ribosomal_bS21_sf"/>
</dbReference>
<dbReference type="NCBIfam" id="TIGR00030">
    <property type="entry name" value="S21p"/>
    <property type="match status" value="1"/>
</dbReference>
<dbReference type="PANTHER" id="PTHR21109">
    <property type="entry name" value="MITOCHONDRIAL 28S RIBOSOMAL PROTEIN S21"/>
    <property type="match status" value="1"/>
</dbReference>
<dbReference type="PANTHER" id="PTHR21109:SF0">
    <property type="entry name" value="SMALL RIBOSOMAL SUBUNIT PROTEIN BS21M"/>
    <property type="match status" value="1"/>
</dbReference>
<dbReference type="Pfam" id="PF01165">
    <property type="entry name" value="Ribosomal_S21"/>
    <property type="match status" value="1"/>
</dbReference>
<dbReference type="PROSITE" id="PS01181">
    <property type="entry name" value="RIBOSOMAL_S21"/>
    <property type="match status" value="1"/>
</dbReference>
<organism>
    <name type="scientific">Nitrobacter hamburgensis (strain DSM 10229 / NCIMB 13809 / X14)</name>
    <dbReference type="NCBI Taxonomy" id="323097"/>
    <lineage>
        <taxon>Bacteria</taxon>
        <taxon>Pseudomonadati</taxon>
        <taxon>Pseudomonadota</taxon>
        <taxon>Alphaproteobacteria</taxon>
        <taxon>Hyphomicrobiales</taxon>
        <taxon>Nitrobacteraceae</taxon>
        <taxon>Nitrobacter</taxon>
    </lineage>
</organism>